<proteinExistence type="evidence at protein level"/>
<organism evidence="9">
    <name type="scientific">Callinectes bellicosus</name>
    <name type="common">Warrior swimming crab</name>
    <dbReference type="NCBI Taxonomy" id="257890"/>
    <lineage>
        <taxon>Eukaryota</taxon>
        <taxon>Metazoa</taxon>
        <taxon>Ecdysozoa</taxon>
        <taxon>Arthropoda</taxon>
        <taxon>Crustacea</taxon>
        <taxon>Multicrustacea</taxon>
        <taxon>Malacostraca</taxon>
        <taxon>Eumalacostraca</taxon>
        <taxon>Eucarida</taxon>
        <taxon>Decapoda</taxon>
        <taxon>Pleocyemata</taxon>
        <taxon>Brachyura</taxon>
        <taxon>Eubrachyura</taxon>
        <taxon>Portunoidea</taxon>
        <taxon>Portunidae</taxon>
        <taxon>Portuninae</taxon>
        <taxon>Callinectes</taxon>
    </lineage>
</organism>
<accession>A0A976YI25</accession>
<feature type="chain" id="PRO_0000458160" description="Arginine kinase Cal b 2.0101">
    <location>
        <begin position="1"/>
        <end position="357"/>
    </location>
</feature>
<feature type="domain" description="Phosphagen kinase N-terminal" evidence="4">
    <location>
        <begin position="9"/>
        <end position="91"/>
    </location>
</feature>
<feature type="domain" description="Phosphagen kinase C-terminal" evidence="5">
    <location>
        <begin position="119"/>
        <end position="356"/>
    </location>
</feature>
<feature type="binding site" evidence="3">
    <location>
        <begin position="64"/>
        <end position="68"/>
    </location>
    <ligand>
        <name>L-arginine</name>
        <dbReference type="ChEBI" id="CHEBI:32682"/>
    </ligand>
</feature>
<feature type="binding site" evidence="5">
    <location>
        <begin position="122"/>
        <end position="126"/>
    </location>
    <ligand>
        <name>ATP</name>
        <dbReference type="ChEBI" id="CHEBI:30616"/>
    </ligand>
</feature>
<feature type="binding site" evidence="5">
    <location>
        <position position="185"/>
    </location>
    <ligand>
        <name>ATP</name>
        <dbReference type="ChEBI" id="CHEBI:30616"/>
    </ligand>
</feature>
<feature type="binding site" evidence="3">
    <location>
        <position position="225"/>
    </location>
    <ligand>
        <name>L-arginine</name>
        <dbReference type="ChEBI" id="CHEBI:32682"/>
    </ligand>
</feature>
<feature type="binding site" evidence="5">
    <location>
        <position position="229"/>
    </location>
    <ligand>
        <name>ATP</name>
        <dbReference type="ChEBI" id="CHEBI:30616"/>
    </ligand>
</feature>
<feature type="binding site" evidence="3">
    <location>
        <position position="271"/>
    </location>
    <ligand>
        <name>L-arginine</name>
        <dbReference type="ChEBI" id="CHEBI:32682"/>
    </ligand>
</feature>
<feature type="binding site" evidence="5">
    <location>
        <begin position="280"/>
        <end position="284"/>
    </location>
    <ligand>
        <name>ATP</name>
        <dbReference type="ChEBI" id="CHEBI:30616"/>
    </ligand>
</feature>
<feature type="binding site" evidence="5">
    <location>
        <begin position="309"/>
        <end position="314"/>
    </location>
    <ligand>
        <name>ATP</name>
        <dbReference type="ChEBI" id="CHEBI:30616"/>
    </ligand>
</feature>
<feature type="binding site" evidence="3">
    <location>
        <position position="314"/>
    </location>
    <ligand>
        <name>L-arginine</name>
        <dbReference type="ChEBI" id="CHEBI:32682"/>
    </ligand>
</feature>
<feature type="disulfide bond" evidence="2">
    <location>
        <begin position="201"/>
        <end position="271"/>
    </location>
</feature>
<sequence>MAEAATIAKLEEGFKKLEAATDCKSLLKKYLTKSVFDQLKGKKTSLGATLLDVIQSGVENLDSGVGVYAPDAEAYTLFAPLFDPIIEDYHKGFKQTDKHPNKDFGDVNQFVNVDPDGKFVISTRVRCGRSMEGYPFNPCLTEAQYKEMESKVSSTLSNLEGELKGTYFPLTGMTKDVQQKLIDDHFLFKEGDRFLQAANACRYWPTGRGIYHNDNKTFLVWCNEEDHLRIISMQMGGDLGQVYRRLVSAVNEIEKRVPFSHHDRLGFLTFCPTNLGTTVRASVHIKLPKLAANREKLEEVAGKYSLQVRGTRGEHTEAEGGVYDISNKRRMGLTEYQAVKEMQDGILELIKIEKEMQ</sequence>
<reference evidence="9" key="1">
    <citation type="journal article" date="2022" name="Mol. Immunol.">
        <title>Identification of arginine kinase as an allergen of brown crab, Callinectes bellicosus, and in silico analysis of IgE-binding epitopes.</title>
        <authorList>
            <person name="Brassea-Estardante H.A."/>
            <person name="Martinez-Cruz O."/>
            <person name="Cardenas-Lopez J.L."/>
            <person name="Garcia-Orozco K.D."/>
            <person name="Ochoa-Leyva A."/>
            <person name="Lopez-Zavala A.A."/>
        </authorList>
    </citation>
    <scope>NUCLEOTIDE SEQUENCE [MRNA]</scope>
    <scope>IDENTIFICATION BY MASS SPECTROMETRY</scope>
    <scope>TISSUE SPECIFICITY</scope>
    <scope>ALLERGEN</scope>
    <scope>3D-STRUCTURE MODELING</scope>
    <scope>PREDICTED IGE-BINDING EPITOPES</scope>
    <source>
        <tissue evidence="7">Muscle</tissue>
    </source>
</reference>
<name>KARG_CALBE</name>
<protein>
    <recommendedName>
        <fullName evidence="8">Arginine kinase Cal b 2.0101</fullName>
        <ecNumber evidence="1 9">2.7.3.3</ecNumber>
    </recommendedName>
    <alternativeName>
        <fullName evidence="7">Allergen Cal b 2</fullName>
    </alternativeName>
    <alternativeName>
        <fullName evidence="7">Arginine kinase</fullName>
        <shortName evidence="7">AK</shortName>
    </alternativeName>
    <allergenName evidence="8">Cal b 2.0101</allergenName>
</protein>
<keyword id="KW-0020">Allergen</keyword>
<keyword id="KW-0067">ATP-binding</keyword>
<keyword id="KW-1015">Disulfide bond</keyword>
<keyword id="KW-0418">Kinase</keyword>
<keyword id="KW-0547">Nucleotide-binding</keyword>
<keyword id="KW-0808">Transferase</keyword>
<evidence type="ECO:0000250" key="1">
    <source>
        <dbReference type="UniProtKB" id="C9EIP1"/>
    </source>
</evidence>
<evidence type="ECO:0000250" key="2">
    <source>
        <dbReference type="UniProtKB" id="H6VGI3"/>
    </source>
</evidence>
<evidence type="ECO:0000250" key="3">
    <source>
        <dbReference type="UniProtKB" id="Q004B5"/>
    </source>
</evidence>
<evidence type="ECO:0000255" key="4">
    <source>
        <dbReference type="PROSITE-ProRule" id="PRU00842"/>
    </source>
</evidence>
<evidence type="ECO:0000255" key="5">
    <source>
        <dbReference type="PROSITE-ProRule" id="PRU00843"/>
    </source>
</evidence>
<evidence type="ECO:0000269" key="6">
    <source>
    </source>
</evidence>
<evidence type="ECO:0000303" key="7">
    <source>
    </source>
</evidence>
<evidence type="ECO:0000305" key="8"/>
<evidence type="ECO:0000312" key="9">
    <source>
        <dbReference type="EMBL" id="UVH30529.1"/>
    </source>
</evidence>
<comment type="function">
    <text evidence="1">Catalyzes the reversible transfer of high energy ATP gamma-phosphate group to L-arginine.</text>
</comment>
<comment type="catalytic activity">
    <reaction evidence="1">
        <text>L-arginine + ATP = N(omega)-phospho-L-arginine + ADP + H(+)</text>
        <dbReference type="Rhea" id="RHEA:22940"/>
        <dbReference type="ChEBI" id="CHEBI:15378"/>
        <dbReference type="ChEBI" id="CHEBI:30616"/>
        <dbReference type="ChEBI" id="CHEBI:32682"/>
        <dbReference type="ChEBI" id="CHEBI:58477"/>
        <dbReference type="ChEBI" id="CHEBI:456216"/>
        <dbReference type="EC" id="2.7.3.3"/>
    </reaction>
</comment>
<comment type="tissue specificity">
    <text evidence="6">Expressed in chela muscle (at protein level). Expressed in muscle.</text>
</comment>
<comment type="allergen">
    <text evidence="6">Causes an allergic reaction in human. The native and denatured protein binds to IgE in 70% and 80% of the 10 crab/crustacean-allergic patients tested, respectively.</text>
</comment>
<comment type="similarity">
    <text evidence="4 5 8">Belongs to the ATP:guanido phosphotransferase family.</text>
</comment>
<dbReference type="EC" id="2.7.3.3" evidence="1 9"/>
<dbReference type="EMBL" id="MW602301">
    <property type="protein sequence ID" value="UVH30529.1"/>
    <property type="molecule type" value="mRNA"/>
</dbReference>
<dbReference type="SMR" id="A0A976YI25"/>
<dbReference type="GO" id="GO:0005615">
    <property type="term" value="C:extracellular space"/>
    <property type="evidence" value="ECO:0007669"/>
    <property type="project" value="TreeGrafter"/>
</dbReference>
<dbReference type="GO" id="GO:0004054">
    <property type="term" value="F:arginine kinase activity"/>
    <property type="evidence" value="ECO:0000250"/>
    <property type="project" value="UniProtKB"/>
</dbReference>
<dbReference type="GO" id="GO:0005524">
    <property type="term" value="F:ATP binding"/>
    <property type="evidence" value="ECO:0007669"/>
    <property type="project" value="UniProtKB-KW"/>
</dbReference>
<dbReference type="GO" id="GO:0004111">
    <property type="term" value="F:creatine kinase activity"/>
    <property type="evidence" value="ECO:0007669"/>
    <property type="project" value="InterPro"/>
</dbReference>
<dbReference type="GO" id="GO:0046314">
    <property type="term" value="P:phosphocreatine biosynthetic process"/>
    <property type="evidence" value="ECO:0007669"/>
    <property type="project" value="InterPro"/>
</dbReference>
<dbReference type="CDD" id="cd07932">
    <property type="entry name" value="arginine_kinase_like"/>
    <property type="match status" value="1"/>
</dbReference>
<dbReference type="FunFam" id="3.30.590.10:FF:000006">
    <property type="entry name" value="Arginine kinase 1"/>
    <property type="match status" value="1"/>
</dbReference>
<dbReference type="FunFam" id="1.10.135.10:FF:000003">
    <property type="entry name" value="Three-domain arginine kinase"/>
    <property type="match status" value="1"/>
</dbReference>
<dbReference type="Gene3D" id="1.10.135.10">
    <property type="entry name" value="ATP:guanido phosphotransferase, N-terminal domain"/>
    <property type="match status" value="1"/>
</dbReference>
<dbReference type="Gene3D" id="3.30.590.10">
    <property type="entry name" value="Glutamine synthetase/guanido kinase, catalytic domain"/>
    <property type="match status" value="1"/>
</dbReference>
<dbReference type="InterPro" id="IPR000749">
    <property type="entry name" value="ATP-guanido_PTrfase"/>
</dbReference>
<dbReference type="InterPro" id="IPR022415">
    <property type="entry name" value="ATP-guanido_PTrfase_AS"/>
</dbReference>
<dbReference type="InterPro" id="IPR022414">
    <property type="entry name" value="ATP-guanido_PTrfase_cat"/>
</dbReference>
<dbReference type="InterPro" id="IPR022413">
    <property type="entry name" value="ATP-guanido_PTrfase_N"/>
</dbReference>
<dbReference type="InterPro" id="IPR036802">
    <property type="entry name" value="ATP-guanido_PTrfase_N_sf"/>
</dbReference>
<dbReference type="InterPro" id="IPR014746">
    <property type="entry name" value="Gln_synth/guanido_kin_cat_dom"/>
</dbReference>
<dbReference type="PANTHER" id="PTHR11547:SF38">
    <property type="entry name" value="ARGININE KINASE 1-RELATED"/>
    <property type="match status" value="1"/>
</dbReference>
<dbReference type="PANTHER" id="PTHR11547">
    <property type="entry name" value="ARGININE OR CREATINE KINASE"/>
    <property type="match status" value="1"/>
</dbReference>
<dbReference type="Pfam" id="PF00217">
    <property type="entry name" value="ATP-gua_Ptrans"/>
    <property type="match status" value="1"/>
</dbReference>
<dbReference type="Pfam" id="PF02807">
    <property type="entry name" value="ATP-gua_PtransN"/>
    <property type="match status" value="1"/>
</dbReference>
<dbReference type="SUPFAM" id="SSF55931">
    <property type="entry name" value="Glutamine synthetase/guanido kinase"/>
    <property type="match status" value="1"/>
</dbReference>
<dbReference type="SUPFAM" id="SSF48034">
    <property type="entry name" value="Guanido kinase N-terminal domain"/>
    <property type="match status" value="1"/>
</dbReference>
<dbReference type="PROSITE" id="PS00112">
    <property type="entry name" value="PHOSPHAGEN_KINASE"/>
    <property type="match status" value="1"/>
</dbReference>
<dbReference type="PROSITE" id="PS51510">
    <property type="entry name" value="PHOSPHAGEN_KINASE_C"/>
    <property type="match status" value="1"/>
</dbReference>
<dbReference type="PROSITE" id="PS51509">
    <property type="entry name" value="PHOSPHAGEN_KINASE_N"/>
    <property type="match status" value="1"/>
</dbReference>